<gene>
    <name evidence="1" type="primary">bioB</name>
    <name type="ordered locus">BH1748</name>
</gene>
<name>BIOB_HALH5</name>
<evidence type="ECO:0000255" key="1">
    <source>
        <dbReference type="HAMAP-Rule" id="MF_01694"/>
    </source>
</evidence>
<evidence type="ECO:0000255" key="2">
    <source>
        <dbReference type="PROSITE-ProRule" id="PRU01266"/>
    </source>
</evidence>
<feature type="chain" id="PRO_0000381229" description="Biotin synthase">
    <location>
        <begin position="1"/>
        <end position="333"/>
    </location>
</feature>
<feature type="domain" description="Radical SAM core" evidence="2">
    <location>
        <begin position="46"/>
        <end position="275"/>
    </location>
</feature>
<feature type="binding site" evidence="1">
    <location>
        <position position="64"/>
    </location>
    <ligand>
        <name>[4Fe-4S] cluster</name>
        <dbReference type="ChEBI" id="CHEBI:49883"/>
        <note>4Fe-4S-S-AdoMet</note>
    </ligand>
</feature>
<feature type="binding site" evidence="1">
    <location>
        <position position="68"/>
    </location>
    <ligand>
        <name>[4Fe-4S] cluster</name>
        <dbReference type="ChEBI" id="CHEBI:49883"/>
        <note>4Fe-4S-S-AdoMet</note>
    </ligand>
</feature>
<feature type="binding site" evidence="1">
    <location>
        <position position="71"/>
    </location>
    <ligand>
        <name>[4Fe-4S] cluster</name>
        <dbReference type="ChEBI" id="CHEBI:49883"/>
        <note>4Fe-4S-S-AdoMet</note>
    </ligand>
</feature>
<feature type="binding site" evidence="1">
    <location>
        <position position="108"/>
    </location>
    <ligand>
        <name>[2Fe-2S] cluster</name>
        <dbReference type="ChEBI" id="CHEBI:190135"/>
    </ligand>
</feature>
<feature type="binding site" evidence="1">
    <location>
        <position position="140"/>
    </location>
    <ligand>
        <name>[2Fe-2S] cluster</name>
        <dbReference type="ChEBI" id="CHEBI:190135"/>
    </ligand>
</feature>
<feature type="binding site" evidence="1">
    <location>
        <position position="200"/>
    </location>
    <ligand>
        <name>[2Fe-2S] cluster</name>
        <dbReference type="ChEBI" id="CHEBI:190135"/>
    </ligand>
</feature>
<feature type="binding site" evidence="1">
    <location>
        <position position="270"/>
    </location>
    <ligand>
        <name>[2Fe-2S] cluster</name>
        <dbReference type="ChEBI" id="CHEBI:190135"/>
    </ligand>
</feature>
<accession>Q9KC26</accession>
<proteinExistence type="inferred from homology"/>
<sequence length="333" mass="36814">MNWIQLAQEVIEGKRISENEALAILNSPDDELLLLLQGAFTIRQTYYGKKVKLNMIMNAKSGFCPENCGYCSQSSISKAPIDAYPMVNKETILEGAKRAHELNVGTYCIVASGRGPTNRDIDHVTEAVREIKDTYGLKICACLGILKPEQAEQLKAAGVDRYNHNVNTSARHHDQITTSHTYEDRVNTVEVVKHSGISPCSGVIVGMKETKEDVVDMAFQLRELDADSIPVNFLHAIDGTPLQGVHELTPIYCLKVLSLFRYVCPTKEIRISGGREVNLKSLQPLGLYAANSIFIGDYLTTAGQEETADHQILKDLGFEVESVEEMKASLQGQ</sequence>
<reference key="1">
    <citation type="journal article" date="2000" name="Nucleic Acids Res.">
        <title>Complete genome sequence of the alkaliphilic bacterium Bacillus halodurans and genomic sequence comparison with Bacillus subtilis.</title>
        <authorList>
            <person name="Takami H."/>
            <person name="Nakasone K."/>
            <person name="Takaki Y."/>
            <person name="Maeno G."/>
            <person name="Sasaki R."/>
            <person name="Masui N."/>
            <person name="Fuji F."/>
            <person name="Hirama C."/>
            <person name="Nakamura Y."/>
            <person name="Ogasawara N."/>
            <person name="Kuhara S."/>
            <person name="Horikoshi K."/>
        </authorList>
    </citation>
    <scope>NUCLEOTIDE SEQUENCE [LARGE SCALE GENOMIC DNA]</scope>
    <source>
        <strain>ATCC BAA-125 / DSM 18197 / FERM 7344 / JCM 9153 / C-125</strain>
    </source>
</reference>
<protein>
    <recommendedName>
        <fullName evidence="1">Biotin synthase</fullName>
        <ecNumber evidence="1">2.8.1.6</ecNumber>
    </recommendedName>
</protein>
<dbReference type="EC" id="2.8.1.6" evidence="1"/>
<dbReference type="EMBL" id="BA000004">
    <property type="protein sequence ID" value="BAB05467.1"/>
    <property type="molecule type" value="Genomic_DNA"/>
</dbReference>
<dbReference type="PIR" id="D83868">
    <property type="entry name" value="D83868"/>
</dbReference>
<dbReference type="RefSeq" id="WP_010897909.1">
    <property type="nucleotide sequence ID" value="NC_002570.2"/>
</dbReference>
<dbReference type="SMR" id="Q9KC26"/>
<dbReference type="STRING" id="272558.gene:10727646"/>
<dbReference type="DNASU" id="892640"/>
<dbReference type="KEGG" id="bha:BH1748"/>
<dbReference type="eggNOG" id="COG0502">
    <property type="taxonomic scope" value="Bacteria"/>
</dbReference>
<dbReference type="HOGENOM" id="CLU_033172_2_1_9"/>
<dbReference type="OrthoDB" id="9786826at2"/>
<dbReference type="UniPathway" id="UPA00078">
    <property type="reaction ID" value="UER00162"/>
</dbReference>
<dbReference type="Proteomes" id="UP000001258">
    <property type="component" value="Chromosome"/>
</dbReference>
<dbReference type="GO" id="GO:0051537">
    <property type="term" value="F:2 iron, 2 sulfur cluster binding"/>
    <property type="evidence" value="ECO:0007669"/>
    <property type="project" value="UniProtKB-KW"/>
</dbReference>
<dbReference type="GO" id="GO:0051539">
    <property type="term" value="F:4 iron, 4 sulfur cluster binding"/>
    <property type="evidence" value="ECO:0007669"/>
    <property type="project" value="UniProtKB-KW"/>
</dbReference>
<dbReference type="GO" id="GO:0004076">
    <property type="term" value="F:biotin synthase activity"/>
    <property type="evidence" value="ECO:0007669"/>
    <property type="project" value="UniProtKB-UniRule"/>
</dbReference>
<dbReference type="GO" id="GO:0005506">
    <property type="term" value="F:iron ion binding"/>
    <property type="evidence" value="ECO:0007669"/>
    <property type="project" value="UniProtKB-UniRule"/>
</dbReference>
<dbReference type="GO" id="GO:0009102">
    <property type="term" value="P:biotin biosynthetic process"/>
    <property type="evidence" value="ECO:0007669"/>
    <property type="project" value="UniProtKB-UniRule"/>
</dbReference>
<dbReference type="CDD" id="cd01335">
    <property type="entry name" value="Radical_SAM"/>
    <property type="match status" value="1"/>
</dbReference>
<dbReference type="FunFam" id="3.20.20.70:FF:000026">
    <property type="entry name" value="Biotin synthase"/>
    <property type="match status" value="1"/>
</dbReference>
<dbReference type="Gene3D" id="3.20.20.70">
    <property type="entry name" value="Aldolase class I"/>
    <property type="match status" value="1"/>
</dbReference>
<dbReference type="HAMAP" id="MF_01694">
    <property type="entry name" value="BioB"/>
    <property type="match status" value="1"/>
</dbReference>
<dbReference type="InterPro" id="IPR013785">
    <property type="entry name" value="Aldolase_TIM"/>
</dbReference>
<dbReference type="InterPro" id="IPR010722">
    <property type="entry name" value="BATS_dom"/>
</dbReference>
<dbReference type="InterPro" id="IPR002684">
    <property type="entry name" value="Biotin_synth/BioAB"/>
</dbReference>
<dbReference type="InterPro" id="IPR024177">
    <property type="entry name" value="Biotin_synthase"/>
</dbReference>
<dbReference type="InterPro" id="IPR006638">
    <property type="entry name" value="Elp3/MiaA/NifB-like_rSAM"/>
</dbReference>
<dbReference type="InterPro" id="IPR007197">
    <property type="entry name" value="rSAM"/>
</dbReference>
<dbReference type="NCBIfam" id="TIGR00433">
    <property type="entry name" value="bioB"/>
    <property type="match status" value="1"/>
</dbReference>
<dbReference type="PANTHER" id="PTHR22976">
    <property type="entry name" value="BIOTIN SYNTHASE"/>
    <property type="match status" value="1"/>
</dbReference>
<dbReference type="PANTHER" id="PTHR22976:SF2">
    <property type="entry name" value="BIOTIN SYNTHASE, MITOCHONDRIAL"/>
    <property type="match status" value="1"/>
</dbReference>
<dbReference type="Pfam" id="PF06968">
    <property type="entry name" value="BATS"/>
    <property type="match status" value="1"/>
</dbReference>
<dbReference type="Pfam" id="PF04055">
    <property type="entry name" value="Radical_SAM"/>
    <property type="match status" value="1"/>
</dbReference>
<dbReference type="PIRSF" id="PIRSF001619">
    <property type="entry name" value="Biotin_synth"/>
    <property type="match status" value="1"/>
</dbReference>
<dbReference type="SFLD" id="SFLDG01278">
    <property type="entry name" value="biotin_synthase_like"/>
    <property type="match status" value="1"/>
</dbReference>
<dbReference type="SFLD" id="SFLDS00029">
    <property type="entry name" value="Radical_SAM"/>
    <property type="match status" value="1"/>
</dbReference>
<dbReference type="SMART" id="SM00876">
    <property type="entry name" value="BATS"/>
    <property type="match status" value="1"/>
</dbReference>
<dbReference type="SMART" id="SM00729">
    <property type="entry name" value="Elp3"/>
    <property type="match status" value="1"/>
</dbReference>
<dbReference type="SUPFAM" id="SSF102114">
    <property type="entry name" value="Radical SAM enzymes"/>
    <property type="match status" value="1"/>
</dbReference>
<dbReference type="PROSITE" id="PS51918">
    <property type="entry name" value="RADICAL_SAM"/>
    <property type="match status" value="1"/>
</dbReference>
<keyword id="KW-0001">2Fe-2S</keyword>
<keyword id="KW-0004">4Fe-4S</keyword>
<keyword id="KW-0093">Biotin biosynthesis</keyword>
<keyword id="KW-0408">Iron</keyword>
<keyword id="KW-0411">Iron-sulfur</keyword>
<keyword id="KW-0479">Metal-binding</keyword>
<keyword id="KW-1185">Reference proteome</keyword>
<keyword id="KW-0949">S-adenosyl-L-methionine</keyword>
<keyword id="KW-0808">Transferase</keyword>
<organism>
    <name type="scientific">Halalkalibacterium halodurans (strain ATCC BAA-125 / DSM 18197 / FERM 7344 / JCM 9153 / C-125)</name>
    <name type="common">Bacillus halodurans</name>
    <dbReference type="NCBI Taxonomy" id="272558"/>
    <lineage>
        <taxon>Bacteria</taxon>
        <taxon>Bacillati</taxon>
        <taxon>Bacillota</taxon>
        <taxon>Bacilli</taxon>
        <taxon>Bacillales</taxon>
        <taxon>Bacillaceae</taxon>
        <taxon>Halalkalibacterium (ex Joshi et al. 2022)</taxon>
    </lineage>
</organism>
<comment type="function">
    <text evidence="1">Catalyzes the conversion of dethiobiotin (DTB) to biotin by the insertion of a sulfur atom into dethiobiotin via a radical-based mechanism.</text>
</comment>
<comment type="catalytic activity">
    <reaction evidence="1">
        <text>(4R,5S)-dethiobiotin + (sulfur carrier)-SH + 2 reduced [2Fe-2S]-[ferredoxin] + 2 S-adenosyl-L-methionine = (sulfur carrier)-H + biotin + 2 5'-deoxyadenosine + 2 L-methionine + 2 oxidized [2Fe-2S]-[ferredoxin]</text>
        <dbReference type="Rhea" id="RHEA:22060"/>
        <dbReference type="Rhea" id="RHEA-COMP:10000"/>
        <dbReference type="Rhea" id="RHEA-COMP:10001"/>
        <dbReference type="Rhea" id="RHEA-COMP:14737"/>
        <dbReference type="Rhea" id="RHEA-COMP:14739"/>
        <dbReference type="ChEBI" id="CHEBI:17319"/>
        <dbReference type="ChEBI" id="CHEBI:29917"/>
        <dbReference type="ChEBI" id="CHEBI:33737"/>
        <dbReference type="ChEBI" id="CHEBI:33738"/>
        <dbReference type="ChEBI" id="CHEBI:57586"/>
        <dbReference type="ChEBI" id="CHEBI:57844"/>
        <dbReference type="ChEBI" id="CHEBI:59789"/>
        <dbReference type="ChEBI" id="CHEBI:64428"/>
        <dbReference type="ChEBI" id="CHEBI:149473"/>
        <dbReference type="EC" id="2.8.1.6"/>
    </reaction>
</comment>
<comment type="cofactor">
    <cofactor evidence="1">
        <name>[4Fe-4S] cluster</name>
        <dbReference type="ChEBI" id="CHEBI:49883"/>
    </cofactor>
    <text evidence="1">Binds 1 [4Fe-4S] cluster. The cluster is coordinated with 3 cysteines and an exchangeable S-adenosyl-L-methionine.</text>
</comment>
<comment type="cofactor">
    <cofactor evidence="1">
        <name>[2Fe-2S] cluster</name>
        <dbReference type="ChEBI" id="CHEBI:190135"/>
    </cofactor>
    <text evidence="1">Binds 1 [2Fe-2S] cluster. The cluster is coordinated with 3 cysteines and 1 arginine.</text>
</comment>
<comment type="pathway">
    <text evidence="1">Cofactor biosynthesis; biotin biosynthesis; biotin from 7,8-diaminononanoate: step 2/2.</text>
</comment>
<comment type="subunit">
    <text evidence="1">Homodimer.</text>
</comment>
<comment type="similarity">
    <text evidence="1">Belongs to the radical SAM superfamily. Biotin synthase family.</text>
</comment>